<keyword id="KW-0007">Acetylation</keyword>
<keyword id="KW-0012">Acyltransferase</keyword>
<keyword id="KW-0284">Flavonoid biosynthesis</keyword>
<keyword id="KW-0808">Transferase</keyword>
<reference key="1">
    <citation type="journal article" date="1991" name="Plant Mol. Biol.">
        <title>Cloning and characterization of a chalcone synthase gene from mustard and its light-dependent expression.</title>
        <authorList>
            <person name="Batschauer A."/>
            <person name="Ehmann B."/>
            <person name="Schaefer E."/>
        </authorList>
    </citation>
    <scope>NUCLEOTIDE SEQUENCE</scope>
    <source>
        <tissue>Cotyledon</tissue>
    </source>
</reference>
<reference key="2">
    <citation type="journal article" date="1988" name="Plant Mol. Biol.">
        <title>Nucleotide sequences encoding two different chalcone synthases expressed in cotyledons of SAN 9789 treated mustard (Sinapis alba L.).</title>
        <authorList>
            <person name="Ehmann B."/>
            <person name="Schaefer E."/>
        </authorList>
        <dbReference type="AGRICOLA" id="IND91035202"/>
    </citation>
    <scope>NUCLEOTIDE SEQUENCE [MRNA] OF 124-395</scope>
    <source>
        <tissue>Cotyledon</tissue>
    </source>
</reference>
<gene>
    <name type="primary">CHS1</name>
</gene>
<organism>
    <name type="scientific">Sinapis alba</name>
    <name type="common">White mustard</name>
    <name type="synonym">Brassica hirta</name>
    <dbReference type="NCBI Taxonomy" id="3728"/>
    <lineage>
        <taxon>Eukaryota</taxon>
        <taxon>Viridiplantae</taxon>
        <taxon>Streptophyta</taxon>
        <taxon>Embryophyta</taxon>
        <taxon>Tracheophyta</taxon>
        <taxon>Spermatophyta</taxon>
        <taxon>Magnoliopsida</taxon>
        <taxon>eudicotyledons</taxon>
        <taxon>Gunneridae</taxon>
        <taxon>Pentapetalae</taxon>
        <taxon>rosids</taxon>
        <taxon>malvids</taxon>
        <taxon>Brassicales</taxon>
        <taxon>Brassicaceae</taxon>
        <taxon>Brassiceae</taxon>
        <taxon>Sinapis</taxon>
    </lineage>
</organism>
<evidence type="ECO:0000250" key="1">
    <source>
        <dbReference type="UniProtKB" id="P13114"/>
    </source>
</evidence>
<evidence type="ECO:0000255" key="2">
    <source>
        <dbReference type="PROSITE-ProRule" id="PRU10023"/>
    </source>
</evidence>
<evidence type="ECO:0000305" key="3"/>
<protein>
    <recommendedName>
        <fullName>Chalcone synthase 1</fullName>
        <ecNumber>2.3.1.74</ecNumber>
    </recommendedName>
    <alternativeName>
        <fullName>Naringenin-chalcone synthase 1</fullName>
    </alternativeName>
</protein>
<proteinExistence type="evidence at transcript level"/>
<comment type="function">
    <text>The primary product of this enzyme is 4,2',4',6'-tetrahydroxychalcone (also termed naringenin-chalcone or chalcone) which can under specific conditions spontaneously isomerize into naringenin.</text>
</comment>
<comment type="catalytic activity">
    <reaction evidence="2">
        <text>(E)-4-coumaroyl-CoA + 3 malonyl-CoA + 3 H(+) = 2',4,4',6'-tetrahydroxychalcone + 3 CO2 + 4 CoA</text>
        <dbReference type="Rhea" id="RHEA:11128"/>
        <dbReference type="ChEBI" id="CHEBI:15378"/>
        <dbReference type="ChEBI" id="CHEBI:15413"/>
        <dbReference type="ChEBI" id="CHEBI:16526"/>
        <dbReference type="ChEBI" id="CHEBI:57287"/>
        <dbReference type="ChEBI" id="CHEBI:57384"/>
        <dbReference type="ChEBI" id="CHEBI:85008"/>
        <dbReference type="EC" id="2.3.1.74"/>
    </reaction>
</comment>
<comment type="pathway">
    <text>Secondary metabolite biosynthesis; flavonoid biosynthesis.</text>
</comment>
<comment type="similarity">
    <text evidence="3">Belongs to the thiolase-like superfamily. Chalcone/stilbene synthases family.</text>
</comment>
<accession>P13416</accession>
<name>CHS1_SINAL</name>
<feature type="initiator methionine" description="Removed" evidence="1">
    <location>
        <position position="1"/>
    </location>
</feature>
<feature type="chain" id="PRO_0000216050" description="Chalcone synthase 1">
    <location>
        <begin position="2"/>
        <end position="395"/>
    </location>
</feature>
<feature type="active site" evidence="2">
    <location>
        <position position="169"/>
    </location>
</feature>
<feature type="modified residue" description="N-acetylvaline" evidence="1">
    <location>
        <position position="2"/>
    </location>
</feature>
<feature type="sequence conflict" description="In Ref. 2; CAA32496." evidence="3" ref="2">
    <original>E</original>
    <variation>R</variation>
    <location>
        <position position="291"/>
    </location>
</feature>
<dbReference type="EC" id="2.3.1.74"/>
<dbReference type="EMBL" id="X16437">
    <property type="protein sequence ID" value="CAA34460.1"/>
    <property type="molecule type" value="Genomic_DNA"/>
</dbReference>
<dbReference type="EMBL" id="X14315">
    <property type="protein sequence ID" value="CAA32496.1"/>
    <property type="molecule type" value="mRNA"/>
</dbReference>
<dbReference type="PIR" id="S14716">
    <property type="entry name" value="SYISC1"/>
</dbReference>
<dbReference type="SMR" id="P13416"/>
<dbReference type="UniPathway" id="UPA00154"/>
<dbReference type="GO" id="GO:0016210">
    <property type="term" value="F:naringenin-chalcone synthase activity"/>
    <property type="evidence" value="ECO:0007669"/>
    <property type="project" value="UniProtKB-EC"/>
</dbReference>
<dbReference type="GO" id="GO:0009813">
    <property type="term" value="P:flavonoid biosynthetic process"/>
    <property type="evidence" value="ECO:0007669"/>
    <property type="project" value="UniProtKB-UniPathway"/>
</dbReference>
<dbReference type="GO" id="GO:0030639">
    <property type="term" value="P:polyketide biosynthetic process"/>
    <property type="evidence" value="ECO:0007669"/>
    <property type="project" value="TreeGrafter"/>
</dbReference>
<dbReference type="CDD" id="cd00831">
    <property type="entry name" value="CHS_like"/>
    <property type="match status" value="1"/>
</dbReference>
<dbReference type="FunFam" id="3.40.47.10:FF:000014">
    <property type="entry name" value="Chalcone synthase 1"/>
    <property type="match status" value="1"/>
</dbReference>
<dbReference type="FunFam" id="3.40.47.10:FF:000025">
    <property type="entry name" value="Chalcone synthase 2"/>
    <property type="match status" value="1"/>
</dbReference>
<dbReference type="Gene3D" id="3.40.47.10">
    <property type="match status" value="2"/>
</dbReference>
<dbReference type="InterPro" id="IPR012328">
    <property type="entry name" value="Chalcone/stilbene_synt_C"/>
</dbReference>
<dbReference type="InterPro" id="IPR001099">
    <property type="entry name" value="Chalcone/stilbene_synt_N"/>
</dbReference>
<dbReference type="InterPro" id="IPR018088">
    <property type="entry name" value="Chalcone/stilbene_synthase_AS"/>
</dbReference>
<dbReference type="InterPro" id="IPR011141">
    <property type="entry name" value="Polyketide_synthase_type-III"/>
</dbReference>
<dbReference type="InterPro" id="IPR016039">
    <property type="entry name" value="Thiolase-like"/>
</dbReference>
<dbReference type="PANTHER" id="PTHR11877:SF14">
    <property type="entry name" value="CHALCONE SYNTHASE"/>
    <property type="match status" value="1"/>
</dbReference>
<dbReference type="PANTHER" id="PTHR11877">
    <property type="entry name" value="HYDROXYMETHYLGLUTARYL-COA SYNTHASE"/>
    <property type="match status" value="1"/>
</dbReference>
<dbReference type="Pfam" id="PF02797">
    <property type="entry name" value="Chal_sti_synt_C"/>
    <property type="match status" value="1"/>
</dbReference>
<dbReference type="Pfam" id="PF00195">
    <property type="entry name" value="Chal_sti_synt_N"/>
    <property type="match status" value="1"/>
</dbReference>
<dbReference type="PIRSF" id="PIRSF000451">
    <property type="entry name" value="PKS_III"/>
    <property type="match status" value="1"/>
</dbReference>
<dbReference type="SUPFAM" id="SSF53901">
    <property type="entry name" value="Thiolase-like"/>
    <property type="match status" value="2"/>
</dbReference>
<dbReference type="PROSITE" id="PS00441">
    <property type="entry name" value="CHALCONE_SYNTH"/>
    <property type="match status" value="1"/>
</dbReference>
<sequence length="395" mass="42994">MVMGTPSSLDEIRKAQRADGPAGILAIGTANPANHVIQAEYPDYYFRITNSEHMTDLKEKFKRMCDKSTIRKRHMHLTEEFLKDNPNMCAYMAPSLDARQDIVVVEVPKLGKEAAVKAIKEWGQPKSKITHVVFCTTSGVDMPGADYQLTKLLGLRPSVKRLMMYQQGCFAGGTVLRLAKDLAENNRGARVLVVCSEITAVTFRGPSDTHLDSLVGQALFSDGAAALIVGSDADISAGEKPIFEMVSAAQTILPDSDGAIDGHLREVGLTFHLLKDVPGLISKNIEKSLDEAFKPLGISDWNSLFWIAHPGGPAILDDVEKKLGLKAEKMRATRHVLSEYGNMSSACVLFILDEMRRKSVEDGVATTGEGLEWGVLFGFGPGLTVETVVLHSVPV</sequence>